<gene>
    <name evidence="1" type="primary">prfA</name>
    <name type="synonym">prf1</name>
    <name type="ordered locus">LMOf2365_2516</name>
</gene>
<dbReference type="EMBL" id="AE017262">
    <property type="protein sequence ID" value="AAT05281.1"/>
    <property type="molecule type" value="Genomic_DNA"/>
</dbReference>
<dbReference type="RefSeq" id="WP_003726351.1">
    <property type="nucleotide sequence ID" value="NC_002973.6"/>
</dbReference>
<dbReference type="SMR" id="Q71WN5"/>
<dbReference type="KEGG" id="lmf:LMOf2365_2516"/>
<dbReference type="HOGENOM" id="CLU_036856_0_1_9"/>
<dbReference type="GO" id="GO:0005737">
    <property type="term" value="C:cytoplasm"/>
    <property type="evidence" value="ECO:0007669"/>
    <property type="project" value="UniProtKB-SubCell"/>
</dbReference>
<dbReference type="GO" id="GO:0016149">
    <property type="term" value="F:translation release factor activity, codon specific"/>
    <property type="evidence" value="ECO:0007669"/>
    <property type="project" value="UniProtKB-UniRule"/>
</dbReference>
<dbReference type="FunFam" id="3.30.160.20:FF:000004">
    <property type="entry name" value="Peptide chain release factor 1"/>
    <property type="match status" value="1"/>
</dbReference>
<dbReference type="FunFam" id="3.30.70.1660:FF:000002">
    <property type="entry name" value="Peptide chain release factor 1"/>
    <property type="match status" value="1"/>
</dbReference>
<dbReference type="FunFam" id="3.30.70.1660:FF:000004">
    <property type="entry name" value="Peptide chain release factor 1"/>
    <property type="match status" value="1"/>
</dbReference>
<dbReference type="Gene3D" id="3.30.160.20">
    <property type="match status" value="1"/>
</dbReference>
<dbReference type="Gene3D" id="3.30.70.1660">
    <property type="match status" value="1"/>
</dbReference>
<dbReference type="Gene3D" id="6.10.140.1950">
    <property type="match status" value="1"/>
</dbReference>
<dbReference type="HAMAP" id="MF_00093">
    <property type="entry name" value="Rel_fac_1"/>
    <property type="match status" value="1"/>
</dbReference>
<dbReference type="InterPro" id="IPR005139">
    <property type="entry name" value="PCRF"/>
</dbReference>
<dbReference type="InterPro" id="IPR000352">
    <property type="entry name" value="Pep_chain_release_fac_I"/>
</dbReference>
<dbReference type="InterPro" id="IPR045853">
    <property type="entry name" value="Pep_chain_release_fac_I_sf"/>
</dbReference>
<dbReference type="InterPro" id="IPR050057">
    <property type="entry name" value="Prokaryotic/Mito_RF"/>
</dbReference>
<dbReference type="InterPro" id="IPR004373">
    <property type="entry name" value="RF-1"/>
</dbReference>
<dbReference type="NCBIfam" id="TIGR00019">
    <property type="entry name" value="prfA"/>
    <property type="match status" value="1"/>
</dbReference>
<dbReference type="NCBIfam" id="NF001859">
    <property type="entry name" value="PRK00591.1"/>
    <property type="match status" value="1"/>
</dbReference>
<dbReference type="PANTHER" id="PTHR43804">
    <property type="entry name" value="LD18447P"/>
    <property type="match status" value="1"/>
</dbReference>
<dbReference type="PANTHER" id="PTHR43804:SF7">
    <property type="entry name" value="LD18447P"/>
    <property type="match status" value="1"/>
</dbReference>
<dbReference type="Pfam" id="PF03462">
    <property type="entry name" value="PCRF"/>
    <property type="match status" value="1"/>
</dbReference>
<dbReference type="Pfam" id="PF00472">
    <property type="entry name" value="RF-1"/>
    <property type="match status" value="1"/>
</dbReference>
<dbReference type="SMART" id="SM00937">
    <property type="entry name" value="PCRF"/>
    <property type="match status" value="1"/>
</dbReference>
<dbReference type="SUPFAM" id="SSF75620">
    <property type="entry name" value="Release factor"/>
    <property type="match status" value="1"/>
</dbReference>
<dbReference type="PROSITE" id="PS00745">
    <property type="entry name" value="RF_PROK_I"/>
    <property type="match status" value="1"/>
</dbReference>
<protein>
    <recommendedName>
        <fullName evidence="1">Peptide chain release factor 1</fullName>
        <shortName evidence="1">RF-1</shortName>
    </recommendedName>
</protein>
<comment type="function">
    <text evidence="1">Peptide chain release factor 1 directs the termination of translation in response to the peptide chain termination codons UAG and UAA.</text>
</comment>
<comment type="subcellular location">
    <subcellularLocation>
        <location evidence="1">Cytoplasm</location>
    </subcellularLocation>
</comment>
<comment type="PTM">
    <text evidence="1">Methylated by PrmC. Methylation increases the termination efficiency of RF1.</text>
</comment>
<comment type="similarity">
    <text evidence="1">Belongs to the prokaryotic/mitochondrial release factor family.</text>
</comment>
<reference key="1">
    <citation type="journal article" date="2004" name="Nucleic Acids Res.">
        <title>Whole genome comparisons of serotype 4b and 1/2a strains of the food-borne pathogen Listeria monocytogenes reveal new insights into the core genome components of this species.</title>
        <authorList>
            <person name="Nelson K.E."/>
            <person name="Fouts D.E."/>
            <person name="Mongodin E.F."/>
            <person name="Ravel J."/>
            <person name="DeBoy R.T."/>
            <person name="Kolonay J.F."/>
            <person name="Rasko D.A."/>
            <person name="Angiuoli S.V."/>
            <person name="Gill S.R."/>
            <person name="Paulsen I.T."/>
            <person name="Peterson J.D."/>
            <person name="White O."/>
            <person name="Nelson W.C."/>
            <person name="Nierman W.C."/>
            <person name="Beanan M.J."/>
            <person name="Brinkac L.M."/>
            <person name="Daugherty S.C."/>
            <person name="Dodson R.J."/>
            <person name="Durkin A.S."/>
            <person name="Madupu R."/>
            <person name="Haft D.H."/>
            <person name="Selengut J."/>
            <person name="Van Aken S.E."/>
            <person name="Khouri H.M."/>
            <person name="Fedorova N."/>
            <person name="Forberger H.A."/>
            <person name="Tran B."/>
            <person name="Kathariou S."/>
            <person name="Wonderling L.D."/>
            <person name="Uhlich G.A."/>
            <person name="Bayles D.O."/>
            <person name="Luchansky J.B."/>
            <person name="Fraser C.M."/>
        </authorList>
    </citation>
    <scope>NUCLEOTIDE SEQUENCE [LARGE SCALE GENOMIC DNA]</scope>
    <source>
        <strain>F2365</strain>
    </source>
</reference>
<evidence type="ECO:0000255" key="1">
    <source>
        <dbReference type="HAMAP-Rule" id="MF_00093"/>
    </source>
</evidence>
<accession>Q71WN5</accession>
<keyword id="KW-0963">Cytoplasm</keyword>
<keyword id="KW-0488">Methylation</keyword>
<keyword id="KW-0648">Protein biosynthesis</keyword>
<name>RF1_LISMF</name>
<sequence length="358" mass="40680">MYDRLQAVEDRYDELNELLSDPDVVSDPKRLRDLSKEQSGITATVETYREYKNVNEQINETKELLGEKLDDEMREMAKEEFAELQKEKADLEERLKLLLVPKDPNDDKNVILEIRGAAGGDEAALFAGDLFRMYSKYAESRGWKVEIMDANPTGIGGYKEIIAMMNGNDAFSRMKYENGAHRVQRVPETESGGRIHTSTATVAILPEAEEVEIELHDKDIRTDTFASTGAGGQSVNTTMSAVRLTHIPTGIVVSMQDERSQLKNKDKAMKVLRARVYDKFEREAREEYDANRKSAVGTGDRSERIRTYNYPQNRVTDHRIGLTIQKLDQIMEGKLDEIIDALILEDQTSKLEHLNDAN</sequence>
<organism>
    <name type="scientific">Listeria monocytogenes serotype 4b (strain F2365)</name>
    <dbReference type="NCBI Taxonomy" id="265669"/>
    <lineage>
        <taxon>Bacteria</taxon>
        <taxon>Bacillati</taxon>
        <taxon>Bacillota</taxon>
        <taxon>Bacilli</taxon>
        <taxon>Bacillales</taxon>
        <taxon>Listeriaceae</taxon>
        <taxon>Listeria</taxon>
    </lineage>
</organism>
<proteinExistence type="inferred from homology"/>
<feature type="chain" id="PRO_0000177694" description="Peptide chain release factor 1">
    <location>
        <begin position="1"/>
        <end position="358"/>
    </location>
</feature>
<feature type="modified residue" description="N5-methylglutamine" evidence="1">
    <location>
        <position position="233"/>
    </location>
</feature>